<proteinExistence type="evidence at protein level"/>
<feature type="signal peptide" evidence="1">
    <location>
        <begin position="1"/>
        <end position="24"/>
    </location>
</feature>
<feature type="chain" id="PRO_0000294448" description="Transmembrane protein 52B">
    <location>
        <begin position="25"/>
        <end position="183"/>
    </location>
</feature>
<feature type="transmembrane region" description="Helical" evidence="1">
    <location>
        <begin position="40"/>
        <end position="60"/>
    </location>
</feature>
<feature type="region of interest" description="Disordered" evidence="2">
    <location>
        <begin position="158"/>
        <end position="183"/>
    </location>
</feature>
<feature type="compositionally biased region" description="Basic and acidic residues" evidence="2">
    <location>
        <begin position="163"/>
        <end position="177"/>
    </location>
</feature>
<feature type="splice variant" id="VSP_026640" description="In isoform 2." evidence="3 4">
    <original>MGVRVHVVAASALLYFILLSGTRCEENCGNPEH</original>
    <variation>MSWRPQPCCISSC</variation>
    <location>
        <begin position="1"/>
        <end position="33"/>
    </location>
</feature>
<reference key="1">
    <citation type="journal article" date="2003" name="Genome Res.">
        <title>The secreted protein discovery initiative (SPDI), a large-scale effort to identify novel human secreted and transmembrane proteins: a bioinformatics assessment.</title>
        <authorList>
            <person name="Clark H.F."/>
            <person name="Gurney A.L."/>
            <person name="Abaya E."/>
            <person name="Baker K."/>
            <person name="Baldwin D.T."/>
            <person name="Brush J."/>
            <person name="Chen J."/>
            <person name="Chow B."/>
            <person name="Chui C."/>
            <person name="Crowley C."/>
            <person name="Currell B."/>
            <person name="Deuel B."/>
            <person name="Dowd P."/>
            <person name="Eaton D."/>
            <person name="Foster J.S."/>
            <person name="Grimaldi C."/>
            <person name="Gu Q."/>
            <person name="Hass P.E."/>
            <person name="Heldens S."/>
            <person name="Huang A."/>
            <person name="Kim H.S."/>
            <person name="Klimowski L."/>
            <person name="Jin Y."/>
            <person name="Johnson S."/>
            <person name="Lee J."/>
            <person name="Lewis L."/>
            <person name="Liao D."/>
            <person name="Mark M.R."/>
            <person name="Robbie E."/>
            <person name="Sanchez C."/>
            <person name="Schoenfeld J."/>
            <person name="Seshagiri S."/>
            <person name="Simmons L."/>
            <person name="Singh J."/>
            <person name="Smith V."/>
            <person name="Stinson J."/>
            <person name="Vagts A."/>
            <person name="Vandlen R.L."/>
            <person name="Watanabe C."/>
            <person name="Wieand D."/>
            <person name="Woods K."/>
            <person name="Xie M.-H."/>
            <person name="Yansura D.G."/>
            <person name="Yi S."/>
            <person name="Yu G."/>
            <person name="Yuan J."/>
            <person name="Zhang M."/>
            <person name="Zhang Z."/>
            <person name="Goddard A.D."/>
            <person name="Wood W.I."/>
            <person name="Godowski P.J."/>
            <person name="Gray A.M."/>
        </authorList>
    </citation>
    <scope>NUCLEOTIDE SEQUENCE [LARGE SCALE MRNA] (ISOFORM 2)</scope>
</reference>
<reference key="2">
    <citation type="journal article" date="2004" name="Nat. Genet.">
        <title>Complete sequencing and characterization of 21,243 full-length human cDNAs.</title>
        <authorList>
            <person name="Ota T."/>
            <person name="Suzuki Y."/>
            <person name="Nishikawa T."/>
            <person name="Otsuki T."/>
            <person name="Sugiyama T."/>
            <person name="Irie R."/>
            <person name="Wakamatsu A."/>
            <person name="Hayashi K."/>
            <person name="Sato H."/>
            <person name="Nagai K."/>
            <person name="Kimura K."/>
            <person name="Makita H."/>
            <person name="Sekine M."/>
            <person name="Obayashi M."/>
            <person name="Nishi T."/>
            <person name="Shibahara T."/>
            <person name="Tanaka T."/>
            <person name="Ishii S."/>
            <person name="Yamamoto J."/>
            <person name="Saito K."/>
            <person name="Kawai Y."/>
            <person name="Isono Y."/>
            <person name="Nakamura Y."/>
            <person name="Nagahari K."/>
            <person name="Murakami K."/>
            <person name="Yasuda T."/>
            <person name="Iwayanagi T."/>
            <person name="Wagatsuma M."/>
            <person name="Shiratori A."/>
            <person name="Sudo H."/>
            <person name="Hosoiri T."/>
            <person name="Kaku Y."/>
            <person name="Kodaira H."/>
            <person name="Kondo H."/>
            <person name="Sugawara M."/>
            <person name="Takahashi M."/>
            <person name="Kanda K."/>
            <person name="Yokoi T."/>
            <person name="Furuya T."/>
            <person name="Kikkawa E."/>
            <person name="Omura Y."/>
            <person name="Abe K."/>
            <person name="Kamihara K."/>
            <person name="Katsuta N."/>
            <person name="Sato K."/>
            <person name="Tanikawa M."/>
            <person name="Yamazaki M."/>
            <person name="Ninomiya K."/>
            <person name="Ishibashi T."/>
            <person name="Yamashita H."/>
            <person name="Murakawa K."/>
            <person name="Fujimori K."/>
            <person name="Tanai H."/>
            <person name="Kimata M."/>
            <person name="Watanabe M."/>
            <person name="Hiraoka S."/>
            <person name="Chiba Y."/>
            <person name="Ishida S."/>
            <person name="Ono Y."/>
            <person name="Takiguchi S."/>
            <person name="Watanabe S."/>
            <person name="Yosida M."/>
            <person name="Hotuta T."/>
            <person name="Kusano J."/>
            <person name="Kanehori K."/>
            <person name="Takahashi-Fujii A."/>
            <person name="Hara H."/>
            <person name="Tanase T.-O."/>
            <person name="Nomura Y."/>
            <person name="Togiya S."/>
            <person name="Komai F."/>
            <person name="Hara R."/>
            <person name="Takeuchi K."/>
            <person name="Arita M."/>
            <person name="Imose N."/>
            <person name="Musashino K."/>
            <person name="Yuuki H."/>
            <person name="Oshima A."/>
            <person name="Sasaki N."/>
            <person name="Aotsuka S."/>
            <person name="Yoshikawa Y."/>
            <person name="Matsunawa H."/>
            <person name="Ichihara T."/>
            <person name="Shiohata N."/>
            <person name="Sano S."/>
            <person name="Moriya S."/>
            <person name="Momiyama H."/>
            <person name="Satoh N."/>
            <person name="Takami S."/>
            <person name="Terashima Y."/>
            <person name="Suzuki O."/>
            <person name="Nakagawa S."/>
            <person name="Senoh A."/>
            <person name="Mizoguchi H."/>
            <person name="Goto Y."/>
            <person name="Shimizu F."/>
            <person name="Wakebe H."/>
            <person name="Hishigaki H."/>
            <person name="Watanabe T."/>
            <person name="Sugiyama A."/>
            <person name="Takemoto M."/>
            <person name="Kawakami B."/>
            <person name="Yamazaki M."/>
            <person name="Watanabe K."/>
            <person name="Kumagai A."/>
            <person name="Itakura S."/>
            <person name="Fukuzumi Y."/>
            <person name="Fujimori Y."/>
            <person name="Komiyama M."/>
            <person name="Tashiro H."/>
            <person name="Tanigami A."/>
            <person name="Fujiwara T."/>
            <person name="Ono T."/>
            <person name="Yamada K."/>
            <person name="Fujii Y."/>
            <person name="Ozaki K."/>
            <person name="Hirao M."/>
            <person name="Ohmori Y."/>
            <person name="Kawabata A."/>
            <person name="Hikiji T."/>
            <person name="Kobatake N."/>
            <person name="Inagaki H."/>
            <person name="Ikema Y."/>
            <person name="Okamoto S."/>
            <person name="Okitani R."/>
            <person name="Kawakami T."/>
            <person name="Noguchi S."/>
            <person name="Itoh T."/>
            <person name="Shigeta K."/>
            <person name="Senba T."/>
            <person name="Matsumura K."/>
            <person name="Nakajima Y."/>
            <person name="Mizuno T."/>
            <person name="Morinaga M."/>
            <person name="Sasaki M."/>
            <person name="Togashi T."/>
            <person name="Oyama M."/>
            <person name="Hata H."/>
            <person name="Watanabe M."/>
            <person name="Komatsu T."/>
            <person name="Mizushima-Sugano J."/>
            <person name="Satoh T."/>
            <person name="Shirai Y."/>
            <person name="Takahashi Y."/>
            <person name="Nakagawa K."/>
            <person name="Okumura K."/>
            <person name="Nagase T."/>
            <person name="Nomura N."/>
            <person name="Kikuchi H."/>
            <person name="Masuho Y."/>
            <person name="Yamashita R."/>
            <person name="Nakai K."/>
            <person name="Yada T."/>
            <person name="Nakamura Y."/>
            <person name="Ohara O."/>
            <person name="Isogai T."/>
            <person name="Sugano S."/>
        </authorList>
    </citation>
    <scope>NUCLEOTIDE SEQUENCE [LARGE SCALE MRNA] (ISOFORM 2)</scope>
    <source>
        <tissue>Kidney</tissue>
    </source>
</reference>
<reference key="3">
    <citation type="journal article" date="2004" name="Genome Res.">
        <title>The status, quality, and expansion of the NIH full-length cDNA project: the Mammalian Gene Collection (MGC).</title>
        <authorList>
            <consortium name="The MGC Project Team"/>
        </authorList>
    </citation>
    <scope>NUCLEOTIDE SEQUENCE [LARGE SCALE MRNA] (ISOFORM 1)</scope>
    <source>
        <tissue>Lung</tissue>
    </source>
</reference>
<reference key="4">
    <citation type="journal article" date="2006" name="Nature">
        <title>The finished DNA sequence of human chromosome 12.</title>
        <authorList>
            <person name="Scherer S.E."/>
            <person name="Muzny D.M."/>
            <person name="Buhay C.J."/>
            <person name="Chen R."/>
            <person name="Cree A."/>
            <person name="Ding Y."/>
            <person name="Dugan-Rocha S."/>
            <person name="Gill R."/>
            <person name="Gunaratne P."/>
            <person name="Harris R.A."/>
            <person name="Hawes A.C."/>
            <person name="Hernandez J."/>
            <person name="Hodgson A.V."/>
            <person name="Hume J."/>
            <person name="Jackson A."/>
            <person name="Khan Z.M."/>
            <person name="Kovar-Smith C."/>
            <person name="Lewis L.R."/>
            <person name="Lozado R.J."/>
            <person name="Metzker M.L."/>
            <person name="Milosavljevic A."/>
            <person name="Miner G.R."/>
            <person name="Montgomery K.T."/>
            <person name="Morgan M.B."/>
            <person name="Nazareth L.V."/>
            <person name="Scott G."/>
            <person name="Sodergren E."/>
            <person name="Song X.-Z."/>
            <person name="Steffen D."/>
            <person name="Lovering R.C."/>
            <person name="Wheeler D.A."/>
            <person name="Worley K.C."/>
            <person name="Yuan Y."/>
            <person name="Zhang Z."/>
            <person name="Adams C.Q."/>
            <person name="Ansari-Lari M.A."/>
            <person name="Ayele M."/>
            <person name="Brown M.J."/>
            <person name="Chen G."/>
            <person name="Chen Z."/>
            <person name="Clerc-Blankenburg K.P."/>
            <person name="Davis C."/>
            <person name="Delgado O."/>
            <person name="Dinh H.H."/>
            <person name="Draper H."/>
            <person name="Gonzalez-Garay M.L."/>
            <person name="Havlak P."/>
            <person name="Jackson L.R."/>
            <person name="Jacob L.S."/>
            <person name="Kelly S.H."/>
            <person name="Li L."/>
            <person name="Li Z."/>
            <person name="Liu J."/>
            <person name="Liu W."/>
            <person name="Lu J."/>
            <person name="Maheshwari M."/>
            <person name="Nguyen B.-V."/>
            <person name="Okwuonu G.O."/>
            <person name="Pasternak S."/>
            <person name="Perez L.M."/>
            <person name="Plopper F.J.H."/>
            <person name="Santibanez J."/>
            <person name="Shen H."/>
            <person name="Tabor P.E."/>
            <person name="Verduzco D."/>
            <person name="Waldron L."/>
            <person name="Wang Q."/>
            <person name="Williams G.A."/>
            <person name="Zhang J."/>
            <person name="Zhou J."/>
            <person name="Allen C.C."/>
            <person name="Amin A.G."/>
            <person name="Anyalebechi V."/>
            <person name="Bailey M."/>
            <person name="Barbaria J.A."/>
            <person name="Bimage K.E."/>
            <person name="Bryant N.P."/>
            <person name="Burch P.E."/>
            <person name="Burkett C.E."/>
            <person name="Burrell K.L."/>
            <person name="Calderon E."/>
            <person name="Cardenas V."/>
            <person name="Carter K."/>
            <person name="Casias K."/>
            <person name="Cavazos I."/>
            <person name="Cavazos S.R."/>
            <person name="Ceasar H."/>
            <person name="Chacko J."/>
            <person name="Chan S.N."/>
            <person name="Chavez D."/>
            <person name="Christopoulos C."/>
            <person name="Chu J."/>
            <person name="Cockrell R."/>
            <person name="Cox C.D."/>
            <person name="Dang M."/>
            <person name="Dathorne S.R."/>
            <person name="David R."/>
            <person name="Davis C.M."/>
            <person name="Davy-Carroll L."/>
            <person name="Deshazo D.R."/>
            <person name="Donlin J.E."/>
            <person name="D'Souza L."/>
            <person name="Eaves K.A."/>
            <person name="Egan A."/>
            <person name="Emery-Cohen A.J."/>
            <person name="Escotto M."/>
            <person name="Flagg N."/>
            <person name="Forbes L.D."/>
            <person name="Gabisi A.M."/>
            <person name="Garza M."/>
            <person name="Hamilton C."/>
            <person name="Henderson N."/>
            <person name="Hernandez O."/>
            <person name="Hines S."/>
            <person name="Hogues M.E."/>
            <person name="Huang M."/>
            <person name="Idlebird D.G."/>
            <person name="Johnson R."/>
            <person name="Jolivet A."/>
            <person name="Jones S."/>
            <person name="Kagan R."/>
            <person name="King L.M."/>
            <person name="Leal B."/>
            <person name="Lebow H."/>
            <person name="Lee S."/>
            <person name="LeVan J.M."/>
            <person name="Lewis L.C."/>
            <person name="London P."/>
            <person name="Lorensuhewa L.M."/>
            <person name="Loulseged H."/>
            <person name="Lovett D.A."/>
            <person name="Lucier A."/>
            <person name="Lucier R.L."/>
            <person name="Ma J."/>
            <person name="Madu R.C."/>
            <person name="Mapua P."/>
            <person name="Martindale A.D."/>
            <person name="Martinez E."/>
            <person name="Massey E."/>
            <person name="Mawhiney S."/>
            <person name="Meador M.G."/>
            <person name="Mendez S."/>
            <person name="Mercado C."/>
            <person name="Mercado I.C."/>
            <person name="Merritt C.E."/>
            <person name="Miner Z.L."/>
            <person name="Minja E."/>
            <person name="Mitchell T."/>
            <person name="Mohabbat F."/>
            <person name="Mohabbat K."/>
            <person name="Montgomery B."/>
            <person name="Moore N."/>
            <person name="Morris S."/>
            <person name="Munidasa M."/>
            <person name="Ngo R.N."/>
            <person name="Nguyen N.B."/>
            <person name="Nickerson E."/>
            <person name="Nwaokelemeh O.O."/>
            <person name="Nwokenkwo S."/>
            <person name="Obregon M."/>
            <person name="Oguh M."/>
            <person name="Oragunye N."/>
            <person name="Oviedo R.J."/>
            <person name="Parish B.J."/>
            <person name="Parker D.N."/>
            <person name="Parrish J."/>
            <person name="Parks K.L."/>
            <person name="Paul H.A."/>
            <person name="Payton B.A."/>
            <person name="Perez A."/>
            <person name="Perrin W."/>
            <person name="Pickens A."/>
            <person name="Primus E.L."/>
            <person name="Pu L.-L."/>
            <person name="Puazo M."/>
            <person name="Quiles M.M."/>
            <person name="Quiroz J.B."/>
            <person name="Rabata D."/>
            <person name="Reeves K."/>
            <person name="Ruiz S.J."/>
            <person name="Shao H."/>
            <person name="Sisson I."/>
            <person name="Sonaike T."/>
            <person name="Sorelle R.P."/>
            <person name="Sutton A.E."/>
            <person name="Svatek A.F."/>
            <person name="Svetz L.A."/>
            <person name="Tamerisa K.S."/>
            <person name="Taylor T.R."/>
            <person name="Teague B."/>
            <person name="Thomas N."/>
            <person name="Thorn R.D."/>
            <person name="Trejos Z.Y."/>
            <person name="Trevino B.K."/>
            <person name="Ukegbu O.N."/>
            <person name="Urban J.B."/>
            <person name="Vasquez L.I."/>
            <person name="Vera V.A."/>
            <person name="Villasana D.M."/>
            <person name="Wang L."/>
            <person name="Ward-Moore S."/>
            <person name="Warren J.T."/>
            <person name="Wei X."/>
            <person name="White F."/>
            <person name="Williamson A.L."/>
            <person name="Wleczyk R."/>
            <person name="Wooden H.S."/>
            <person name="Wooden S.H."/>
            <person name="Yen J."/>
            <person name="Yoon L."/>
            <person name="Yoon V."/>
            <person name="Zorrilla S.E."/>
            <person name="Nelson D."/>
            <person name="Kucherlapati R."/>
            <person name="Weinstock G."/>
            <person name="Gibbs R.A."/>
        </authorList>
    </citation>
    <scope>NUCLEOTIDE SEQUENCE [LARGE SCALE GENOMIC DNA]</scope>
</reference>
<comment type="interaction">
    <interactant intactId="EBI-18178701">
        <id>Q4KMG9</id>
    </interactant>
    <interactant intactId="EBI-2848814">
        <id>Q92685</id>
        <label>ALG3</label>
    </interactant>
    <organismsDiffer>false</organismsDiffer>
    <experiments>3</experiments>
</comment>
<comment type="interaction">
    <interactant intactId="EBI-18178701">
        <id>Q4KMG9</id>
    </interactant>
    <interactant intactId="EBI-715495">
        <id>P05090</id>
        <label>APOD</label>
    </interactant>
    <organismsDiffer>false</organismsDiffer>
    <experiments>3</experiments>
</comment>
<comment type="interaction">
    <interactant intactId="EBI-18178701">
        <id>Q4KMG9</id>
    </interactant>
    <interactant intactId="EBI-4290634">
        <id>Q9BQE5</id>
        <label>APOL2</label>
    </interactant>
    <organismsDiffer>false</organismsDiffer>
    <experiments>3</experiments>
</comment>
<comment type="interaction">
    <interactant intactId="EBI-18178701">
        <id>Q4KMG9</id>
    </interactant>
    <interactant intactId="EBI-11976321">
        <id>O95236-2</id>
        <label>APOL3</label>
    </interactant>
    <organismsDiffer>false</organismsDiffer>
    <experiments>3</experiments>
</comment>
<comment type="interaction">
    <interactant intactId="EBI-18178701">
        <id>Q4KMG9</id>
    </interactant>
    <interactant intactId="EBI-749204">
        <id>O15155</id>
        <label>BET1</label>
    </interactant>
    <organismsDiffer>false</organismsDiffer>
    <experiments>3</experiments>
</comment>
<comment type="interaction">
    <interactant intactId="EBI-18178701">
        <id>Q4KMG9</id>
    </interactant>
    <interactant intactId="EBI-8648738">
        <id>Q8WVV5</id>
        <label>BTN2A2</label>
    </interactant>
    <organismsDiffer>false</organismsDiffer>
    <experiments>3</experiments>
</comment>
<comment type="interaction">
    <interactant intactId="EBI-18178701">
        <id>Q4KMG9</id>
    </interactant>
    <interactant intactId="EBI-12256978">
        <id>Q8N6F1-2</id>
        <label>CLDN19</label>
    </interactant>
    <organismsDiffer>false</organismsDiffer>
    <experiments>3</experiments>
</comment>
<comment type="interaction">
    <interactant intactId="EBI-18178701">
        <id>Q4KMG9</id>
    </interactant>
    <interactant intactId="EBI-9316372">
        <id>O14493</id>
        <label>CLDN4</label>
    </interactant>
    <organismsDiffer>false</organismsDiffer>
    <experiments>3</experiments>
</comment>
<comment type="interaction">
    <interactant intactId="EBI-18178701">
        <id>Q4KMG9</id>
    </interactant>
    <interactant intactId="EBI-12172273">
        <id>O95406</id>
        <label>CNIH1</label>
    </interactant>
    <organismsDiffer>false</organismsDiffer>
    <experiments>3</experiments>
</comment>
<comment type="interaction">
    <interactant intactId="EBI-18178701">
        <id>Q4KMG9</id>
    </interactant>
    <interactant intactId="EBI-12208021">
        <id>Q8TBE1</id>
        <label>CNIH3</label>
    </interactant>
    <organismsDiffer>false</organismsDiffer>
    <experiments>3</experiments>
</comment>
<comment type="interaction">
    <interactant intactId="EBI-18178701">
        <id>Q4KMG9</id>
    </interactant>
    <interactant intactId="EBI-10267100">
        <id>Q8N6G5</id>
        <label>CSGALNACT2</label>
    </interactant>
    <organismsDiffer>false</organismsDiffer>
    <experiments>3</experiments>
</comment>
<comment type="interaction">
    <interactant intactId="EBI-18178701">
        <id>Q4KMG9</id>
    </interactant>
    <interactant intactId="EBI-8639143">
        <id>Q96LL9</id>
        <label>DNAJC30</label>
    </interactant>
    <organismsDiffer>false</organismsDiffer>
    <experiments>3</experiments>
</comment>
<comment type="interaction">
    <interactant intactId="EBI-18178701">
        <id>Q4KMG9</id>
    </interactant>
    <interactant intactId="EBI-489887">
        <id>P50402</id>
        <label>EMD</label>
    </interactant>
    <organismsDiffer>false</organismsDiffer>
    <experiments>3</experiments>
</comment>
<comment type="interaction">
    <interactant intactId="EBI-18178701">
        <id>Q4KMG9</id>
    </interactant>
    <interactant intactId="EBI-12175685">
        <id>Q14802-3</id>
        <label>FXYD3</label>
    </interactant>
    <organismsDiffer>false</organismsDiffer>
    <experiments>3</experiments>
</comment>
<comment type="interaction">
    <interactant intactId="EBI-18178701">
        <id>Q4KMG9</id>
    </interactant>
    <interactant intactId="EBI-3436637">
        <id>P01350</id>
        <label>GAST</label>
    </interactant>
    <organismsDiffer>false</organismsDiffer>
    <experiments>3</experiments>
</comment>
<comment type="interaction">
    <interactant intactId="EBI-18178701">
        <id>Q4KMG9</id>
    </interactant>
    <interactant intactId="EBI-10178951">
        <id>O00155</id>
        <label>GPR25</label>
    </interactant>
    <organismsDiffer>false</organismsDiffer>
    <experiments>3</experiments>
</comment>
<comment type="interaction">
    <interactant intactId="EBI-18178701">
        <id>Q4KMG9</id>
    </interactant>
    <interactant intactId="EBI-2927498">
        <id>O60883</id>
        <label>GPR37L1</label>
    </interactant>
    <organismsDiffer>false</organismsDiffer>
    <experiments>3</experiments>
</comment>
<comment type="interaction">
    <interactant intactId="EBI-18178701">
        <id>Q4KMG9</id>
    </interactant>
    <interactant intactId="EBI-720480">
        <id>P24593</id>
        <label>IGFBP5</label>
    </interactant>
    <organismsDiffer>false</organismsDiffer>
    <experiments>3</experiments>
</comment>
<comment type="interaction">
    <interactant intactId="EBI-18178701">
        <id>Q4KMG9</id>
    </interactant>
    <interactant intactId="EBI-8503746">
        <id>Q9Y5U4</id>
        <label>INSIG2</label>
    </interactant>
    <organismsDiffer>false</organismsDiffer>
    <experiments>3</experiments>
</comment>
<comment type="interaction">
    <interactant intactId="EBI-18178701">
        <id>Q4KMG9</id>
    </interactant>
    <interactant intactId="EBI-2568251">
        <id>P11215</id>
        <label>ITGAM</label>
    </interactant>
    <organismsDiffer>false</organismsDiffer>
    <experiments>3</experiments>
</comment>
<comment type="interaction">
    <interactant intactId="EBI-18178701">
        <id>Q4KMG9</id>
    </interactant>
    <interactant intactId="EBI-10266796">
        <id>Q8N5M9</id>
        <label>JAGN1</label>
    </interactant>
    <organismsDiffer>false</organismsDiffer>
    <experiments>3</experiments>
</comment>
<comment type="interaction">
    <interactant intactId="EBI-18178701">
        <id>Q4KMG9</id>
    </interactant>
    <interactant intactId="EBI-2820517">
        <id>Q8TAF8</id>
        <label>LHFPL5</label>
    </interactant>
    <organismsDiffer>false</organismsDiffer>
    <experiments>3</experiments>
</comment>
<comment type="interaction">
    <interactant intactId="EBI-18178701">
        <id>Q4KMG9</id>
    </interactant>
    <interactant intactId="EBI-12033434">
        <id>Q9UBY5</id>
        <label>LPAR3</label>
    </interactant>
    <organismsDiffer>false</organismsDiffer>
    <experiments>3</experiments>
</comment>
<comment type="interaction">
    <interactant intactId="EBI-18178701">
        <id>Q4KMG9</id>
    </interactant>
    <interactant intactId="EBI-12241118">
        <id>Q16873</id>
        <label>LTC4S</label>
    </interactant>
    <organismsDiffer>false</organismsDiffer>
    <experiments>3</experiments>
</comment>
<comment type="interaction">
    <interactant intactId="EBI-18178701">
        <id>Q4KMG9</id>
    </interactant>
    <interactant intactId="EBI-3932027">
        <id>P21145</id>
        <label>MAL</label>
    </interactant>
    <organismsDiffer>false</organismsDiffer>
    <experiments>3</experiments>
</comment>
<comment type="interaction">
    <interactant intactId="EBI-18178701">
        <id>Q4KMG9</id>
    </interactant>
    <interactant intactId="EBI-10317612">
        <id>Q9P0N8</id>
        <label>MARCHF2</label>
    </interactant>
    <organismsDiffer>false</organismsDiffer>
    <experiments>3</experiments>
</comment>
<comment type="interaction">
    <interactant intactId="EBI-18178701">
        <id>Q4KMG9</id>
    </interactant>
    <interactant intactId="EBI-8449636">
        <id>P30301</id>
        <label>MIP</label>
    </interactant>
    <organismsDiffer>false</organismsDiffer>
    <experiments>3</experiments>
</comment>
<comment type="interaction">
    <interactant intactId="EBI-18178701">
        <id>Q4KMG9</id>
    </interactant>
    <interactant intactId="EBI-12070086">
        <id>Q5J8X5</id>
        <label>MS4A13</label>
    </interactant>
    <organismsDiffer>false</organismsDiffer>
    <experiments>3</experiments>
</comment>
<comment type="interaction">
    <interactant intactId="EBI-18178701">
        <id>Q4KMG9</id>
    </interactant>
    <interactant intactId="EBI-10317425">
        <id>Q9NZG7</id>
        <label>NINJ2</label>
    </interactant>
    <organismsDiffer>false</organismsDiffer>
    <experiments>3</experiments>
</comment>
<comment type="interaction">
    <interactant intactId="EBI-18178701">
        <id>Q4KMG9</id>
    </interactant>
    <interactant intactId="EBI-10262547">
        <id>Q8IXM6</id>
        <label>NRM</label>
    </interactant>
    <organismsDiffer>false</organismsDiffer>
    <experiments>3</experiments>
</comment>
<comment type="interaction">
    <interactant intactId="EBI-18178701">
        <id>Q4KMG9</id>
    </interactant>
    <interactant intactId="EBI-6380741">
        <id>P42857</id>
        <label>NSG1</label>
    </interactant>
    <organismsDiffer>false</organismsDiffer>
    <experiments>3</experiments>
</comment>
<comment type="interaction">
    <interactant intactId="EBI-18178701">
        <id>Q4KMG9</id>
    </interactant>
    <interactant intactId="EBI-1054848">
        <id>Q9P0S3</id>
        <label>ORMDL1</label>
    </interactant>
    <organismsDiffer>false</organismsDiffer>
    <experiments>3</experiments>
</comment>
<comment type="interaction">
    <interactant intactId="EBI-18178701">
        <id>Q4KMG9</id>
    </interactant>
    <interactant intactId="EBI-12213001">
        <id>I3L0A0</id>
        <label>PEDS1-UBE2V1</label>
    </interactant>
    <organismsDiffer>false</organismsDiffer>
    <experiments>3</experiments>
</comment>
<comment type="interaction">
    <interactant intactId="EBI-18178701">
        <id>Q4KMG9</id>
    </interactant>
    <interactant intactId="EBI-12092917">
        <id>Q9UHJ9-5</id>
        <label>PGAP2</label>
    </interactant>
    <organismsDiffer>false</organismsDiffer>
    <experiments>3</experiments>
</comment>
<comment type="interaction">
    <interactant intactId="EBI-18178701">
        <id>Q4KMG9</id>
    </interactant>
    <interactant intactId="EBI-692836">
        <id>P26678</id>
        <label>PLN</label>
    </interactant>
    <organismsDiffer>false</organismsDiffer>
    <experiments>3</experiments>
</comment>
<comment type="interaction">
    <interactant intactId="EBI-18178701">
        <id>Q4KMG9</id>
    </interactant>
    <interactant intactId="EBI-12188331">
        <id>P60201-2</id>
        <label>PLP1</label>
    </interactant>
    <organismsDiffer>false</organismsDiffer>
    <experiments>3</experiments>
</comment>
<comment type="interaction">
    <interactant intactId="EBI-18178701">
        <id>Q4KMG9</id>
    </interactant>
    <interactant intactId="EBI-10244780">
        <id>Q5QGT7</id>
        <label>RTP2</label>
    </interactant>
    <organismsDiffer>false</organismsDiffer>
    <experiments>3</experiments>
</comment>
<comment type="interaction">
    <interactant intactId="EBI-18178701">
        <id>Q4KMG9</id>
    </interactant>
    <interactant intactId="EBI-8652744">
        <id>Q96IW7</id>
        <label>SEC22A</label>
    </interactant>
    <organismsDiffer>false</organismsDiffer>
    <experiments>3</experiments>
</comment>
<comment type="interaction">
    <interactant intactId="EBI-18178701">
        <id>Q4KMG9</id>
    </interactant>
    <interactant intactId="EBI-10329948">
        <id>Q9Y6X1</id>
        <label>SERP1</label>
    </interactant>
    <organismsDiffer>false</organismsDiffer>
    <experiments>3</experiments>
</comment>
<comment type="interaction">
    <interactant intactId="EBI-18178701">
        <id>Q4KMG9</id>
    </interactant>
    <interactant intactId="EBI-8644112">
        <id>Q9BRI3</id>
        <label>SLC30A2</label>
    </interactant>
    <organismsDiffer>false</organismsDiffer>
    <experiments>3</experiments>
</comment>
<comment type="interaction">
    <interactant intactId="EBI-18178701">
        <id>Q4KMG9</id>
    </interactant>
    <interactant intactId="EBI-10262251">
        <id>Q8IWU4</id>
        <label>SLC30A8</label>
    </interactant>
    <organismsDiffer>false</organismsDiffer>
    <experiments>3</experiments>
</comment>
<comment type="interaction">
    <interactant intactId="EBI-18178701">
        <id>Q4KMG9</id>
    </interactant>
    <interactant intactId="EBI-12363689">
        <id>Q96G79</id>
        <label>SLC35A4</label>
    </interactant>
    <organismsDiffer>false</organismsDiffer>
    <experiments>3</experiments>
</comment>
<comment type="interaction">
    <interactant intactId="EBI-18178701">
        <id>Q4KMG9</id>
    </interactant>
    <interactant intactId="EBI-10281213">
        <id>Q969S0</id>
        <label>SLC35B4</label>
    </interactant>
    <organismsDiffer>false</organismsDiffer>
    <experiments>3</experiments>
</comment>
<comment type="interaction">
    <interactant intactId="EBI-18178701">
        <id>Q4KMG9</id>
    </interactant>
    <interactant intactId="EBI-10314552">
        <id>Q9NVC3</id>
        <label>SLC38A7</label>
    </interactant>
    <organismsDiffer>false</organismsDiffer>
    <experiments>3</experiments>
</comment>
<comment type="interaction">
    <interactant intactId="EBI-18178701">
        <id>Q4KMG9</id>
    </interactant>
    <interactant intactId="EBI-12188413">
        <id>B2RUZ4</id>
        <label>SMIM1</label>
    </interactant>
    <organismsDiffer>false</organismsDiffer>
    <experiments>3</experiments>
</comment>
<comment type="interaction">
    <interactant intactId="EBI-18178701">
        <id>Q4KMG9</id>
    </interactant>
    <interactant intactId="EBI-714319">
        <id>P02787</id>
        <label>TF</label>
    </interactant>
    <organismsDiffer>false</organismsDiffer>
    <experiments>3</experiments>
</comment>
<comment type="interaction">
    <interactant intactId="EBI-18178701">
        <id>Q4KMG9</id>
    </interactant>
    <interactant intactId="EBI-8644968">
        <id>Q9NV29</id>
        <label>TMEM100</label>
    </interactant>
    <organismsDiffer>false</organismsDiffer>
    <experiments>3</experiments>
</comment>
<comment type="interaction">
    <interactant intactId="EBI-18178701">
        <id>Q4KMG9</id>
    </interactant>
    <interactant intactId="EBI-12845616">
        <id>Q6UX40</id>
        <label>TMEM107</label>
    </interactant>
    <organismsDiffer>false</organismsDiffer>
    <experiments>3</experiments>
</comment>
<comment type="interaction">
    <interactant intactId="EBI-18178701">
        <id>Q4KMG9</id>
    </interactant>
    <interactant intactId="EBI-1057733">
        <id>Q9BVC6</id>
        <label>TMEM109</label>
    </interactant>
    <organismsDiffer>false</organismsDiffer>
    <experiments>3</experiments>
</comment>
<comment type="interaction">
    <interactant intactId="EBI-18178701">
        <id>Q4KMG9</id>
    </interactant>
    <interactant intactId="EBI-10694905">
        <id>Q5BJH2-2</id>
        <label>TMEM128</label>
    </interactant>
    <organismsDiffer>false</organismsDiffer>
    <experiments>3</experiments>
</comment>
<comment type="interaction">
    <interactant intactId="EBI-18178701">
        <id>Q4KMG9</id>
    </interactant>
    <interactant intactId="EBI-348587">
        <id>Q9BVK8</id>
        <label>TMEM147</label>
    </interactant>
    <organismsDiffer>false</organismsDiffer>
    <experiments>3</experiments>
</comment>
<comment type="interaction">
    <interactant intactId="EBI-18178701">
        <id>Q4KMG9</id>
    </interactant>
    <interactant intactId="EBI-2339195">
        <id>Q9P0S9</id>
        <label>TMEM14C</label>
    </interactant>
    <organismsDiffer>false</organismsDiffer>
    <experiments>3</experiments>
</comment>
<comment type="interaction">
    <interactant intactId="EBI-18178701">
        <id>Q4KMG9</id>
    </interactant>
    <interactant intactId="EBI-12274070">
        <id>Q969S6</id>
        <label>TMEM203</label>
    </interactant>
    <organismsDiffer>false</organismsDiffer>
    <experiments>3</experiments>
</comment>
<comment type="interaction">
    <interactant intactId="EBI-18178701">
        <id>Q4KMG9</id>
    </interactant>
    <interactant intactId="EBI-10173151">
        <id>A2RU14</id>
        <label>TMEM218</label>
    </interactant>
    <organismsDiffer>false</organismsDiffer>
    <experiments>3</experiments>
</comment>
<comment type="interaction">
    <interactant intactId="EBI-18178701">
        <id>Q4KMG9</id>
    </interactant>
    <interactant intactId="EBI-17555467">
        <id>Q0VDI3</id>
        <label>TMEM267</label>
    </interactant>
    <organismsDiffer>false</organismsDiffer>
    <experiments>3</experiments>
</comment>
<comment type="interaction">
    <interactant intactId="EBI-18178701">
        <id>Q4KMG9</id>
    </interactant>
    <interactant intactId="EBI-12366453">
        <id>P56557</id>
        <label>TMEM50B</label>
    </interactant>
    <organismsDiffer>false</organismsDiffer>
    <experiments>3</experiments>
</comment>
<comment type="interaction">
    <interactant intactId="EBI-18178701">
        <id>Q4KMG9</id>
    </interactant>
    <interactant intactId="EBI-3922833">
        <id>Q969K7</id>
        <label>TMEM54</label>
    </interactant>
    <organismsDiffer>false</organismsDiffer>
    <experiments>3</experiments>
</comment>
<comment type="interaction">
    <interactant intactId="EBI-18178701">
        <id>Q4KMG9</id>
    </interactant>
    <interactant intactId="EBI-2852148">
        <id>Q9H2L4</id>
        <label>TMEM60</label>
    </interactant>
    <organismsDiffer>false</organismsDiffer>
    <experiments>3</experiments>
</comment>
<comment type="interaction">
    <interactant intactId="EBI-18178701">
        <id>Q4KMG9</id>
    </interactant>
    <interactant intactId="EBI-2548832">
        <id>Q8N661</id>
        <label>TMEM86B</label>
    </interactant>
    <organismsDiffer>false</organismsDiffer>
    <experiments>3</experiments>
</comment>
<comment type="interaction">
    <interactant intactId="EBI-18178701">
        <id>Q4KMG9</id>
    </interactant>
    <interactant intactId="EBI-12111910">
        <id>Q5BJF2</id>
        <label>TMEM97</label>
    </interactant>
    <organismsDiffer>false</organismsDiffer>
    <experiments>3</experiments>
</comment>
<comment type="interaction">
    <interactant intactId="EBI-18178701">
        <id>Q4KMG9</id>
    </interactant>
    <interactant intactId="EBI-2820477">
        <id>Q71RG4</id>
        <label>TMUB2</label>
    </interactant>
    <organismsDiffer>false</organismsDiffer>
    <experiments>3</experiments>
</comment>
<comment type="interaction">
    <interactant intactId="EBI-18178701">
        <id>Q4KMG9</id>
    </interactant>
    <interactant intactId="EBI-11996766">
        <id>Q8N609</id>
        <label>TRAM1L1</label>
    </interactant>
    <organismsDiffer>false</organismsDiffer>
    <experiments>3</experiments>
</comment>
<comment type="interaction">
    <interactant intactId="EBI-18178701">
        <id>Q4KMG9</id>
    </interactant>
    <interactant intactId="EBI-10243654">
        <id>Q5BVD1</id>
        <label>TTMP</label>
    </interactant>
    <organismsDiffer>false</organismsDiffer>
    <experiments>3</experiments>
</comment>
<comment type="interaction">
    <interactant intactId="EBI-18178701">
        <id>Q4KMG9</id>
    </interactant>
    <interactant intactId="EBI-11988865">
        <id>A5PKU2</id>
        <label>TUSC5</label>
    </interactant>
    <organismsDiffer>false</organismsDiffer>
    <experiments>3</experiments>
</comment>
<comment type="interaction">
    <interactant intactId="EBI-18178701">
        <id>Q4KMG9</id>
    </interactant>
    <interactant intactId="EBI-722343">
        <id>Q15836</id>
        <label>VAMP3</label>
    </interactant>
    <organismsDiffer>false</organismsDiffer>
    <experiments>3</experiments>
</comment>
<comment type="interaction">
    <interactant intactId="EBI-18178701">
        <id>Q4KMG9</id>
    </interactant>
    <interactant intactId="EBI-10191195">
        <id>O95183</id>
        <label>VAMP5</label>
    </interactant>
    <organismsDiffer>false</organismsDiffer>
    <experiments>3</experiments>
</comment>
<comment type="interaction">
    <interactant intactId="EBI-18178701">
        <id>Q4KMG9</id>
    </interactant>
    <interactant intactId="EBI-12837904">
        <id>Q96MV8</id>
        <label>ZDHHC15</label>
    </interactant>
    <organismsDiffer>false</organismsDiffer>
    <experiments>3</experiments>
</comment>
<comment type="subcellular location">
    <subcellularLocation>
        <location evidence="5">Membrane</location>
        <topology evidence="5">Single-pass type I membrane protein</topology>
    </subcellularLocation>
</comment>
<comment type="alternative products">
    <event type="alternative splicing"/>
    <isoform>
        <id>Q4KMG9-1</id>
        <name>1</name>
        <sequence type="displayed"/>
    </isoform>
    <isoform>
        <id>Q4KMG9-2</id>
        <name>2</name>
        <sequence type="described" ref="VSP_026640"/>
    </isoform>
</comment>
<sequence length="183" mass="20002">MGVRVHVVAASALLYFILLSGTRCEENCGNPEHCLTTDWVHLWYIWLLVVIGALLLLCGLTSLCFRCCCLSRQQNGEDGGPPPCEVTVIAFDHDSTLQSTITSLQSVFGPAARRILAVAHSHSSLGQLPSSLDTLPGYEEALHMSRFTVAMCGQKAPDLPPVPEEKQLPPTEKESTRIVDSWN</sequence>
<organism>
    <name type="scientific">Homo sapiens</name>
    <name type="common">Human</name>
    <dbReference type="NCBI Taxonomy" id="9606"/>
    <lineage>
        <taxon>Eukaryota</taxon>
        <taxon>Metazoa</taxon>
        <taxon>Chordata</taxon>
        <taxon>Craniata</taxon>
        <taxon>Vertebrata</taxon>
        <taxon>Euteleostomi</taxon>
        <taxon>Mammalia</taxon>
        <taxon>Eutheria</taxon>
        <taxon>Euarchontoglires</taxon>
        <taxon>Primates</taxon>
        <taxon>Haplorrhini</taxon>
        <taxon>Catarrhini</taxon>
        <taxon>Hominidae</taxon>
        <taxon>Homo</taxon>
    </lineage>
</organism>
<keyword id="KW-0025">Alternative splicing</keyword>
<keyword id="KW-0472">Membrane</keyword>
<keyword id="KW-1267">Proteomics identification</keyword>
<keyword id="KW-1185">Reference proteome</keyword>
<keyword id="KW-0732">Signal</keyword>
<keyword id="KW-0812">Transmembrane</keyword>
<keyword id="KW-1133">Transmembrane helix</keyword>
<evidence type="ECO:0000255" key="1"/>
<evidence type="ECO:0000256" key="2">
    <source>
        <dbReference type="SAM" id="MobiDB-lite"/>
    </source>
</evidence>
<evidence type="ECO:0000303" key="3">
    <source>
    </source>
</evidence>
<evidence type="ECO:0000303" key="4">
    <source>
    </source>
</evidence>
<evidence type="ECO:0000305" key="5"/>
<accession>Q4KMG9</accession>
<accession>Q96NA7</accession>
<name>TM52B_HUMAN</name>
<protein>
    <recommendedName>
        <fullName>Transmembrane protein 52B</fullName>
    </recommendedName>
</protein>
<gene>
    <name type="primary">TMEM52B</name>
    <name type="synonym">C12orf59</name>
    <name type="ORF">UNQ5927/PRO19821</name>
</gene>
<dbReference type="EMBL" id="AY358845">
    <property type="protein sequence ID" value="AAQ89204.1"/>
    <property type="molecule type" value="mRNA"/>
</dbReference>
<dbReference type="EMBL" id="AK055728">
    <property type="protein sequence ID" value="BAB70998.1"/>
    <property type="molecule type" value="mRNA"/>
</dbReference>
<dbReference type="EMBL" id="AC115676">
    <property type="status" value="NOT_ANNOTATED_CDS"/>
    <property type="molecule type" value="Genomic_DNA"/>
</dbReference>
<dbReference type="EMBL" id="BC098571">
    <property type="protein sequence ID" value="AAH98571.1"/>
    <property type="molecule type" value="mRNA"/>
</dbReference>
<dbReference type="EMBL" id="BC131523">
    <property type="protein sequence ID" value="AAI31524.1"/>
    <property type="molecule type" value="mRNA"/>
</dbReference>
<dbReference type="CCDS" id="CCDS66314.1">
    <molecule id="Q4KMG9-1"/>
</dbReference>
<dbReference type="CCDS" id="CCDS8619.1">
    <molecule id="Q4KMG9-2"/>
</dbReference>
<dbReference type="RefSeq" id="NP_001073283.1">
    <molecule id="Q4KMG9-1"/>
    <property type="nucleotide sequence ID" value="NM_001079815.2"/>
</dbReference>
<dbReference type="RefSeq" id="NP_001371823.1">
    <molecule id="Q4KMG9-1"/>
    <property type="nucleotide sequence ID" value="NM_001384894.1"/>
</dbReference>
<dbReference type="RefSeq" id="NP_001371824.1">
    <molecule id="Q4KMG9-1"/>
    <property type="nucleotide sequence ID" value="NM_001384895.1"/>
</dbReference>
<dbReference type="RefSeq" id="NP_001371825.1">
    <molecule id="Q4KMG9-1"/>
    <property type="nucleotide sequence ID" value="NM_001384896.1"/>
</dbReference>
<dbReference type="RefSeq" id="NP_001371827.1">
    <molecule id="Q4KMG9-2"/>
    <property type="nucleotide sequence ID" value="NM_001384898.1"/>
</dbReference>
<dbReference type="RefSeq" id="NP_694567.1">
    <molecule id="Q4KMG9-2"/>
    <property type="nucleotide sequence ID" value="NM_153022.4"/>
</dbReference>
<dbReference type="RefSeq" id="XP_006719092.1">
    <property type="nucleotide sequence ID" value="XM_006719029.2"/>
</dbReference>
<dbReference type="BioGRID" id="125702">
    <property type="interactions" value="117"/>
</dbReference>
<dbReference type="FunCoup" id="Q4KMG9">
    <property type="interactions" value="98"/>
</dbReference>
<dbReference type="IntAct" id="Q4KMG9">
    <property type="interactions" value="95"/>
</dbReference>
<dbReference type="STRING" id="9606.ENSP00000371348"/>
<dbReference type="iPTMnet" id="Q4KMG9"/>
<dbReference type="PhosphoSitePlus" id="Q4KMG9"/>
<dbReference type="BioMuta" id="TMEM52B"/>
<dbReference type="DMDM" id="121944266"/>
<dbReference type="MassIVE" id="Q4KMG9"/>
<dbReference type="PaxDb" id="9606-ENSP00000371348"/>
<dbReference type="PeptideAtlas" id="Q4KMG9"/>
<dbReference type="Antibodypedia" id="23262">
    <property type="antibodies" value="49 antibodies from 14 providers"/>
</dbReference>
<dbReference type="DNASU" id="120939"/>
<dbReference type="Ensembl" id="ENST00000298530.7">
    <molecule id="Q4KMG9-2"/>
    <property type="protein sequence ID" value="ENSP00000298530.3"/>
    <property type="gene ID" value="ENSG00000165685.9"/>
</dbReference>
<dbReference type="Ensembl" id="ENST00000381923.6">
    <molecule id="Q4KMG9-1"/>
    <property type="protein sequence ID" value="ENSP00000371348.2"/>
    <property type="gene ID" value="ENSG00000165685.9"/>
</dbReference>
<dbReference type="Ensembl" id="ENST00000543484.2">
    <molecule id="Q4KMG9-1"/>
    <property type="protein sequence ID" value="ENSP00000445582.2"/>
    <property type="gene ID" value="ENSG00000165685.9"/>
</dbReference>
<dbReference type="GeneID" id="120939"/>
<dbReference type="KEGG" id="hsa:120939"/>
<dbReference type="MANE-Select" id="ENST00000543484.2">
    <property type="protein sequence ID" value="ENSP00000445582.2"/>
    <property type="RefSeq nucleotide sequence ID" value="NM_001384896.1"/>
    <property type="RefSeq protein sequence ID" value="NP_001371825.1"/>
</dbReference>
<dbReference type="UCSC" id="uc001qxq.4">
    <molecule id="Q4KMG9-1"/>
    <property type="organism name" value="human"/>
</dbReference>
<dbReference type="AGR" id="HGNC:26438"/>
<dbReference type="CTD" id="120939"/>
<dbReference type="DisGeNET" id="120939"/>
<dbReference type="GeneCards" id="TMEM52B"/>
<dbReference type="HGNC" id="HGNC:26438">
    <property type="gene designation" value="TMEM52B"/>
</dbReference>
<dbReference type="HPA" id="ENSG00000165685">
    <property type="expression patterns" value="Tissue enriched (kidney)"/>
</dbReference>
<dbReference type="neXtProt" id="NX_Q4KMG9"/>
<dbReference type="OpenTargets" id="ENSG00000165685"/>
<dbReference type="PharmGKB" id="PA143485388"/>
<dbReference type="VEuPathDB" id="HostDB:ENSG00000165685"/>
<dbReference type="eggNOG" id="ENOG502S0XU">
    <property type="taxonomic scope" value="Eukaryota"/>
</dbReference>
<dbReference type="GeneTree" id="ENSGT00730000111328"/>
<dbReference type="HOGENOM" id="CLU_100623_2_0_1"/>
<dbReference type="InParanoid" id="Q4KMG9"/>
<dbReference type="OMA" id="VCVRCCF"/>
<dbReference type="OrthoDB" id="9361294at2759"/>
<dbReference type="PAN-GO" id="Q4KMG9">
    <property type="GO annotations" value="0 GO annotations based on evolutionary models"/>
</dbReference>
<dbReference type="PhylomeDB" id="Q4KMG9"/>
<dbReference type="TreeFam" id="TF336037"/>
<dbReference type="PathwayCommons" id="Q4KMG9"/>
<dbReference type="SignaLink" id="Q4KMG9"/>
<dbReference type="BioGRID-ORCS" id="120939">
    <property type="hits" value="12 hits in 1144 CRISPR screens"/>
</dbReference>
<dbReference type="GenomeRNAi" id="120939"/>
<dbReference type="Pharos" id="Q4KMG9">
    <property type="development level" value="Tdark"/>
</dbReference>
<dbReference type="PRO" id="PR:Q4KMG9"/>
<dbReference type="Proteomes" id="UP000005640">
    <property type="component" value="Chromosome 12"/>
</dbReference>
<dbReference type="RNAct" id="Q4KMG9">
    <property type="molecule type" value="protein"/>
</dbReference>
<dbReference type="Bgee" id="ENSG00000165685">
    <property type="expression patterns" value="Expressed in kidney epithelium and 115 other cell types or tissues"/>
</dbReference>
<dbReference type="ExpressionAtlas" id="Q4KMG9">
    <property type="expression patterns" value="baseline and differential"/>
</dbReference>
<dbReference type="GO" id="GO:0070062">
    <property type="term" value="C:extracellular exosome"/>
    <property type="evidence" value="ECO:0007005"/>
    <property type="project" value="UniProtKB"/>
</dbReference>
<dbReference type="GO" id="GO:0016020">
    <property type="term" value="C:membrane"/>
    <property type="evidence" value="ECO:0007669"/>
    <property type="project" value="UniProtKB-SubCell"/>
</dbReference>
<dbReference type="InterPro" id="IPR038942">
    <property type="entry name" value="TMEM52"/>
</dbReference>
<dbReference type="PANTHER" id="PTHR33955">
    <property type="entry name" value="TRANSMEMBRANE PROTEIN 52"/>
    <property type="match status" value="1"/>
</dbReference>
<dbReference type="PANTHER" id="PTHR33955:SF1">
    <property type="entry name" value="TRANSMEMBRANE PROTEIN 52B"/>
    <property type="match status" value="1"/>
</dbReference>
<dbReference type="Pfam" id="PF14979">
    <property type="entry name" value="TMEM52"/>
    <property type="match status" value="1"/>
</dbReference>